<organism>
    <name type="scientific">Escherichia coli O1:K1 / APEC</name>
    <dbReference type="NCBI Taxonomy" id="405955"/>
    <lineage>
        <taxon>Bacteria</taxon>
        <taxon>Pseudomonadati</taxon>
        <taxon>Pseudomonadota</taxon>
        <taxon>Gammaproteobacteria</taxon>
        <taxon>Enterobacterales</taxon>
        <taxon>Enterobacteriaceae</taxon>
        <taxon>Escherichia</taxon>
    </lineage>
</organism>
<keyword id="KW-0963">Cytoplasm</keyword>
<keyword id="KW-0238">DNA-binding</keyword>
<keyword id="KW-1185">Reference proteome</keyword>
<keyword id="KW-0678">Repressor</keyword>
<keyword id="KW-0804">Transcription</keyword>
<keyword id="KW-0805">Transcription regulation</keyword>
<gene>
    <name type="primary">rcnR</name>
    <name type="ordered locus">Ecok1_20165</name>
</gene>
<protein>
    <recommendedName>
        <fullName>Transcriptional repressor RcnR</fullName>
    </recommendedName>
</protein>
<evidence type="ECO:0000250" key="1"/>
<evidence type="ECO:0000305" key="2"/>
<dbReference type="EMBL" id="CP000468">
    <property type="status" value="NOT_ANNOTATED_CDS"/>
    <property type="molecule type" value="Genomic_DNA"/>
</dbReference>
<dbReference type="RefSeq" id="WP_000019944.1">
    <property type="nucleotide sequence ID" value="NZ_CADILS010000067.1"/>
</dbReference>
<dbReference type="SMR" id="P0C7I3"/>
<dbReference type="GeneID" id="93775089"/>
<dbReference type="Proteomes" id="UP000008216">
    <property type="component" value="Chromosome"/>
</dbReference>
<dbReference type="GO" id="GO:0005737">
    <property type="term" value="C:cytoplasm"/>
    <property type="evidence" value="ECO:0007669"/>
    <property type="project" value="UniProtKB-SubCell"/>
</dbReference>
<dbReference type="GO" id="GO:0003677">
    <property type="term" value="F:DNA binding"/>
    <property type="evidence" value="ECO:0007669"/>
    <property type="project" value="UniProtKB-KW"/>
</dbReference>
<dbReference type="GO" id="GO:0046872">
    <property type="term" value="F:metal ion binding"/>
    <property type="evidence" value="ECO:0007669"/>
    <property type="project" value="InterPro"/>
</dbReference>
<dbReference type="GO" id="GO:0045892">
    <property type="term" value="P:negative regulation of DNA-templated transcription"/>
    <property type="evidence" value="ECO:0007669"/>
    <property type="project" value="UniProtKB-ARBA"/>
</dbReference>
<dbReference type="CDD" id="cd10153">
    <property type="entry name" value="RcnR-FrmR-like_DUF156"/>
    <property type="match status" value="1"/>
</dbReference>
<dbReference type="FunFam" id="1.20.58.1000:FF:000001">
    <property type="entry name" value="Transcriptional repressor RcnR"/>
    <property type="match status" value="1"/>
</dbReference>
<dbReference type="Gene3D" id="1.20.58.1000">
    <property type="entry name" value="Metal-sensitive repressor, helix protomer"/>
    <property type="match status" value="1"/>
</dbReference>
<dbReference type="InterPro" id="IPR003735">
    <property type="entry name" value="Metal_Tscrpt_repr"/>
</dbReference>
<dbReference type="InterPro" id="IPR038390">
    <property type="entry name" value="Metal_Tscrpt_repr_sf"/>
</dbReference>
<dbReference type="NCBIfam" id="NF011613">
    <property type="entry name" value="PRK15039.1"/>
    <property type="match status" value="1"/>
</dbReference>
<dbReference type="PANTHER" id="PTHR33677">
    <property type="entry name" value="TRANSCRIPTIONAL REPRESSOR FRMR-RELATED"/>
    <property type="match status" value="1"/>
</dbReference>
<dbReference type="PANTHER" id="PTHR33677:SF1">
    <property type="entry name" value="TRANSCRIPTIONAL REPRESSOR RCNR"/>
    <property type="match status" value="1"/>
</dbReference>
<dbReference type="Pfam" id="PF02583">
    <property type="entry name" value="Trns_repr_metal"/>
    <property type="match status" value="1"/>
</dbReference>
<comment type="function">
    <text evidence="1">Repressor of rcnA expression. Acts by binding specifically to the rcnA promoter in the absence of nickel and cobalt. In the presence of one of these metals, it has a weaker affinity for rcnA promoter (By similarity).</text>
</comment>
<comment type="subcellular location">
    <subcellularLocation>
        <location evidence="2">Cytoplasm</location>
    </subcellularLocation>
</comment>
<comment type="similarity">
    <text evidence="2">Belongs to the FrmR/RcnR family.</text>
</comment>
<proteinExistence type="inferred from homology"/>
<feature type="chain" id="PRO_0000332695" description="Transcriptional repressor RcnR">
    <location>
        <begin position="1"/>
        <end position="90"/>
    </location>
</feature>
<accession>P0C7I3</accession>
<name>RCNR_ECOK1</name>
<sequence length="90" mass="10134">MSHTIRDKQKLKARASKIQGQVVALKKMLDEPHECAAVLQQIAAIRGAVNGLMREVIKGHLTEHIVHQGDELKREEDLDVVLKVLDSYIK</sequence>
<reference key="1">
    <citation type="journal article" date="2007" name="J. Bacteriol.">
        <title>The genome sequence of avian pathogenic Escherichia coli strain O1:K1:H7 shares strong similarities with human extraintestinal pathogenic E. coli genomes.</title>
        <authorList>
            <person name="Johnson T.J."/>
            <person name="Kariyawasam S."/>
            <person name="Wannemuehler Y."/>
            <person name="Mangiamele P."/>
            <person name="Johnson S.J."/>
            <person name="Doetkott C."/>
            <person name="Skyberg J.A."/>
            <person name="Lynne A.M."/>
            <person name="Johnson J.R."/>
            <person name="Nolan L.K."/>
        </authorList>
    </citation>
    <scope>NUCLEOTIDE SEQUENCE [LARGE SCALE GENOMIC DNA]</scope>
</reference>